<keyword id="KW-0156">Chromatin regulator</keyword>
<keyword id="KW-0963">Cytoplasm</keyword>
<keyword id="KW-0539">Nucleus</keyword>
<keyword id="KW-1185">Reference proteome</keyword>
<keyword id="KW-0677">Repeat</keyword>
<keyword id="KW-0853">WD repeat</keyword>
<evidence type="ECO:0000250" key="1"/>
<evidence type="ECO:0000250" key="2">
    <source>
        <dbReference type="UniProtKB" id="P39984"/>
    </source>
</evidence>
<evidence type="ECO:0000305" key="3"/>
<feature type="chain" id="PRO_0000227733" description="Histone acetyltransferase type B subunit 2">
    <location>
        <begin position="1"/>
        <end position="436"/>
    </location>
</feature>
<feature type="repeat" description="WD 1">
    <location>
        <begin position="136"/>
        <end position="176"/>
    </location>
</feature>
<feature type="repeat" description="WD 2">
    <location>
        <begin position="187"/>
        <end position="227"/>
    </location>
</feature>
<feature type="repeat" description="WD 3">
    <location>
        <begin position="237"/>
        <end position="277"/>
    </location>
</feature>
<feature type="repeat" description="WD 4">
    <location>
        <begin position="284"/>
        <end position="324"/>
    </location>
</feature>
<feature type="repeat" description="WD 5">
    <location>
        <begin position="328"/>
        <end position="368"/>
    </location>
</feature>
<feature type="repeat" description="WD 6">
    <location>
        <begin position="385"/>
        <end position="425"/>
    </location>
</feature>
<feature type="region of interest" description="Interaction with the histone H4 N-terminus" evidence="2">
    <location>
        <begin position="370"/>
        <end position="374"/>
    </location>
</feature>
<dbReference type="EMBL" id="AAHF01000011">
    <property type="protein sequence ID" value="EAL85992.1"/>
    <property type="molecule type" value="Genomic_DNA"/>
</dbReference>
<dbReference type="RefSeq" id="XP_748030.1">
    <property type="nucleotide sequence ID" value="XM_742937.1"/>
</dbReference>
<dbReference type="SMR" id="Q4WEI5"/>
<dbReference type="FunCoup" id="Q4WEI5">
    <property type="interactions" value="1064"/>
</dbReference>
<dbReference type="STRING" id="330879.Q4WEI5"/>
<dbReference type="EnsemblFungi" id="EAL85992">
    <property type="protein sequence ID" value="EAL85992"/>
    <property type="gene ID" value="AFUA_5G03130"/>
</dbReference>
<dbReference type="GeneID" id="3505380"/>
<dbReference type="KEGG" id="afm:AFUA_5G03130"/>
<dbReference type="VEuPathDB" id="FungiDB:Afu5g03130"/>
<dbReference type="eggNOG" id="KOG0264">
    <property type="taxonomic scope" value="Eukaryota"/>
</dbReference>
<dbReference type="HOGENOM" id="CLU_020445_3_1_1"/>
<dbReference type="InParanoid" id="Q4WEI5"/>
<dbReference type="OMA" id="PHEEGCL"/>
<dbReference type="OrthoDB" id="427795at2759"/>
<dbReference type="Proteomes" id="UP000002530">
    <property type="component" value="Chromosome 5"/>
</dbReference>
<dbReference type="GO" id="GO:0005737">
    <property type="term" value="C:cytoplasm"/>
    <property type="evidence" value="ECO:0000318"/>
    <property type="project" value="GO_Central"/>
</dbReference>
<dbReference type="GO" id="GO:0005634">
    <property type="term" value="C:nucleus"/>
    <property type="evidence" value="ECO:0000318"/>
    <property type="project" value="GO_Central"/>
</dbReference>
<dbReference type="GO" id="GO:0033698">
    <property type="term" value="C:Rpd3L complex"/>
    <property type="evidence" value="ECO:0000318"/>
    <property type="project" value="GO_Central"/>
</dbReference>
<dbReference type="GO" id="GO:0070210">
    <property type="term" value="C:Rpd3L-Expanded complex"/>
    <property type="evidence" value="ECO:0000318"/>
    <property type="project" value="GO_Central"/>
</dbReference>
<dbReference type="GO" id="GO:0042393">
    <property type="term" value="F:histone binding"/>
    <property type="evidence" value="ECO:0000318"/>
    <property type="project" value="GO_Central"/>
</dbReference>
<dbReference type="GO" id="GO:0006338">
    <property type="term" value="P:chromatin remodeling"/>
    <property type="evidence" value="ECO:0000318"/>
    <property type="project" value="GO_Central"/>
</dbReference>
<dbReference type="GO" id="GO:0006355">
    <property type="term" value="P:regulation of DNA-templated transcription"/>
    <property type="evidence" value="ECO:0000318"/>
    <property type="project" value="GO_Central"/>
</dbReference>
<dbReference type="CDD" id="cd00200">
    <property type="entry name" value="WD40"/>
    <property type="match status" value="1"/>
</dbReference>
<dbReference type="FunFam" id="2.130.10.10:FF:000313">
    <property type="entry name" value="Chromatin assembly factor 1 subunit C"/>
    <property type="match status" value="1"/>
</dbReference>
<dbReference type="Gene3D" id="2.130.10.10">
    <property type="entry name" value="YVTN repeat-like/Quinoprotein amine dehydrogenase"/>
    <property type="match status" value="1"/>
</dbReference>
<dbReference type="InterPro" id="IPR020472">
    <property type="entry name" value="G-protein_beta_WD-40_rep"/>
</dbReference>
<dbReference type="InterPro" id="IPR022052">
    <property type="entry name" value="Histone-bd_RBBP4-like_N"/>
</dbReference>
<dbReference type="InterPro" id="IPR015943">
    <property type="entry name" value="WD40/YVTN_repeat-like_dom_sf"/>
</dbReference>
<dbReference type="InterPro" id="IPR019775">
    <property type="entry name" value="WD40_repeat_CS"/>
</dbReference>
<dbReference type="InterPro" id="IPR036322">
    <property type="entry name" value="WD40_repeat_dom_sf"/>
</dbReference>
<dbReference type="InterPro" id="IPR001680">
    <property type="entry name" value="WD40_rpt"/>
</dbReference>
<dbReference type="InterPro" id="IPR050459">
    <property type="entry name" value="WD_repeat_RBAP46/RBAP48/MSI1"/>
</dbReference>
<dbReference type="PANTHER" id="PTHR22850">
    <property type="entry name" value="WD40 REPEAT FAMILY"/>
    <property type="match status" value="1"/>
</dbReference>
<dbReference type="Pfam" id="PF12265">
    <property type="entry name" value="CAF1C_H4-bd"/>
    <property type="match status" value="1"/>
</dbReference>
<dbReference type="Pfam" id="PF00400">
    <property type="entry name" value="WD40"/>
    <property type="match status" value="6"/>
</dbReference>
<dbReference type="PRINTS" id="PR00320">
    <property type="entry name" value="GPROTEINBRPT"/>
</dbReference>
<dbReference type="SMART" id="SM00320">
    <property type="entry name" value="WD40"/>
    <property type="match status" value="6"/>
</dbReference>
<dbReference type="SUPFAM" id="SSF50978">
    <property type="entry name" value="WD40 repeat-like"/>
    <property type="match status" value="1"/>
</dbReference>
<dbReference type="PROSITE" id="PS00678">
    <property type="entry name" value="WD_REPEATS_1"/>
    <property type="match status" value="3"/>
</dbReference>
<dbReference type="PROSITE" id="PS50082">
    <property type="entry name" value="WD_REPEATS_2"/>
    <property type="match status" value="5"/>
</dbReference>
<dbReference type="PROSITE" id="PS50294">
    <property type="entry name" value="WD_REPEATS_REGION"/>
    <property type="match status" value="1"/>
</dbReference>
<accession>Q4WEI5</accession>
<comment type="function">
    <text evidence="2">Regulatory subunit of the histone acetylase B (HAT-B) complex. The complex acetylates 'Lys-12' of histone H4 which is required for telomeric silencing.</text>
</comment>
<comment type="subunit">
    <text evidence="2">Component of the HAT-B complex composed of at least hat1 and hat2. The HAT-B complex binds to histone H4 tail.</text>
</comment>
<comment type="subcellular location">
    <subcellularLocation>
        <location evidence="1">Cytoplasm</location>
    </subcellularLocation>
    <subcellularLocation>
        <location evidence="1">Nucleus</location>
    </subcellularLocation>
</comment>
<comment type="similarity">
    <text evidence="3">Belongs to the WD repeat RBAP46/RBAP48/MSI1 family.</text>
</comment>
<proteinExistence type="inferred from homology"/>
<gene>
    <name type="primary">hat2</name>
    <name type="ORF">AFUA_5G03130</name>
</gene>
<sequence length="436" mass="48951">MEPYDDAVVEEHEEQEEERTEEKIINEEYKTWKKNAPFLYDMILSTALEWPTLTTQWLPDKQEVPDKPYSTHRLLIGTHTSSDAQNYLQIAHVQLPNPSAPNPDDYDEERGEIGGYGGSSKKAPMEIKFNIVQKIDHKGEVNKARYQPQNPNIIATMCTDGRVMVWDRSKHPSLPTGQVNPQMELIGHTKEGFGLSWSPHTAGQLATGSEDKTVRIWDLTTYSKGNKLLKPSRTYTHHSSIVNDVQYHPLHSSLIGTVSDDITLQILDIRESETTRAAASTEGQHRDAINAIAFNPAAETVLATGSADKTIGLWDLRNLKTKLHSLESHTDSVTSISWHPFEEAVLASASYDRKIAFWDLSRAGEEQTPEDAQDGPPELLFQHGGHTNRISDFSWNLNDPWVLCSAAEDNLLQVWKVADAIVGKDLEDVPTEELEP</sequence>
<reference key="1">
    <citation type="journal article" date="2005" name="Nature">
        <title>Genomic sequence of the pathogenic and allergenic filamentous fungus Aspergillus fumigatus.</title>
        <authorList>
            <person name="Nierman W.C."/>
            <person name="Pain A."/>
            <person name="Anderson M.J."/>
            <person name="Wortman J.R."/>
            <person name="Kim H.S."/>
            <person name="Arroyo J."/>
            <person name="Berriman M."/>
            <person name="Abe K."/>
            <person name="Archer D.B."/>
            <person name="Bermejo C."/>
            <person name="Bennett J.W."/>
            <person name="Bowyer P."/>
            <person name="Chen D."/>
            <person name="Collins M."/>
            <person name="Coulsen R."/>
            <person name="Davies R."/>
            <person name="Dyer P.S."/>
            <person name="Farman M.L."/>
            <person name="Fedorova N."/>
            <person name="Fedorova N.D."/>
            <person name="Feldblyum T.V."/>
            <person name="Fischer R."/>
            <person name="Fosker N."/>
            <person name="Fraser A."/>
            <person name="Garcia J.L."/>
            <person name="Garcia M.J."/>
            <person name="Goble A."/>
            <person name="Goldman G.H."/>
            <person name="Gomi K."/>
            <person name="Griffith-Jones S."/>
            <person name="Gwilliam R."/>
            <person name="Haas B.J."/>
            <person name="Haas H."/>
            <person name="Harris D.E."/>
            <person name="Horiuchi H."/>
            <person name="Huang J."/>
            <person name="Humphray S."/>
            <person name="Jimenez J."/>
            <person name="Keller N."/>
            <person name="Khouri H."/>
            <person name="Kitamoto K."/>
            <person name="Kobayashi T."/>
            <person name="Konzack S."/>
            <person name="Kulkarni R."/>
            <person name="Kumagai T."/>
            <person name="Lafton A."/>
            <person name="Latge J.-P."/>
            <person name="Li W."/>
            <person name="Lord A."/>
            <person name="Lu C."/>
            <person name="Majoros W.H."/>
            <person name="May G.S."/>
            <person name="Miller B.L."/>
            <person name="Mohamoud Y."/>
            <person name="Molina M."/>
            <person name="Monod M."/>
            <person name="Mouyna I."/>
            <person name="Mulligan S."/>
            <person name="Murphy L.D."/>
            <person name="O'Neil S."/>
            <person name="Paulsen I."/>
            <person name="Penalva M.A."/>
            <person name="Pertea M."/>
            <person name="Price C."/>
            <person name="Pritchard B.L."/>
            <person name="Quail M.A."/>
            <person name="Rabbinowitsch E."/>
            <person name="Rawlins N."/>
            <person name="Rajandream M.A."/>
            <person name="Reichard U."/>
            <person name="Renauld H."/>
            <person name="Robson G.D."/>
            <person name="Rodriguez de Cordoba S."/>
            <person name="Rodriguez-Pena J.M."/>
            <person name="Ronning C.M."/>
            <person name="Rutter S."/>
            <person name="Salzberg S.L."/>
            <person name="Sanchez M."/>
            <person name="Sanchez-Ferrero J.C."/>
            <person name="Saunders D."/>
            <person name="Seeger K."/>
            <person name="Squares R."/>
            <person name="Squares S."/>
            <person name="Takeuchi M."/>
            <person name="Tekaia F."/>
            <person name="Turner G."/>
            <person name="Vazquez de Aldana C.R."/>
            <person name="Weidman J."/>
            <person name="White O."/>
            <person name="Woodward J.R."/>
            <person name="Yu J.-H."/>
            <person name="Fraser C.M."/>
            <person name="Galagan J.E."/>
            <person name="Asai K."/>
            <person name="Machida M."/>
            <person name="Hall N."/>
            <person name="Barrell B.G."/>
            <person name="Denning D.W."/>
        </authorList>
    </citation>
    <scope>NUCLEOTIDE SEQUENCE [LARGE SCALE GENOMIC DNA]</scope>
    <source>
        <strain>ATCC MYA-4609 / CBS 101355 / FGSC A1100 / Af293</strain>
    </source>
</reference>
<organism>
    <name type="scientific">Aspergillus fumigatus (strain ATCC MYA-4609 / CBS 101355 / FGSC A1100 / Af293)</name>
    <name type="common">Neosartorya fumigata</name>
    <dbReference type="NCBI Taxonomy" id="330879"/>
    <lineage>
        <taxon>Eukaryota</taxon>
        <taxon>Fungi</taxon>
        <taxon>Dikarya</taxon>
        <taxon>Ascomycota</taxon>
        <taxon>Pezizomycotina</taxon>
        <taxon>Eurotiomycetes</taxon>
        <taxon>Eurotiomycetidae</taxon>
        <taxon>Eurotiales</taxon>
        <taxon>Aspergillaceae</taxon>
        <taxon>Aspergillus</taxon>
        <taxon>Aspergillus subgen. Fumigati</taxon>
    </lineage>
</organism>
<protein>
    <recommendedName>
        <fullName>Histone acetyltransferase type B subunit 2</fullName>
    </recommendedName>
</protein>
<name>HAT2_ASPFU</name>